<accession>P96647</accession>
<feature type="signal peptide" evidence="1">
    <location>
        <begin position="1"/>
        <end position="27"/>
    </location>
</feature>
<feature type="chain" id="PRO_0000013694" description="Uncharacterized protein YddJ">
    <location>
        <begin position="28"/>
        <end position="126"/>
    </location>
</feature>
<feature type="region of interest" description="Disordered" evidence="2">
    <location>
        <begin position="93"/>
        <end position="126"/>
    </location>
</feature>
<feature type="compositionally biased region" description="Basic and acidic residues" evidence="2">
    <location>
        <begin position="101"/>
        <end position="126"/>
    </location>
</feature>
<gene>
    <name type="primary">yddJ</name>
    <name type="ordered locus">BSU04990</name>
</gene>
<evidence type="ECO:0000255" key="1"/>
<evidence type="ECO:0000256" key="2">
    <source>
        <dbReference type="SAM" id="MobiDB-lite"/>
    </source>
</evidence>
<reference key="1">
    <citation type="submission" date="1997-03" db="EMBL/GenBank/DDBJ databases">
        <title>A 148 kbp sequence of the region between 35 and 47 degree of the Bacillus subtilis genome.</title>
        <authorList>
            <person name="Kasahara Y."/>
            <person name="Nakai S."/>
            <person name="Lee S."/>
            <person name="Sadaie Y."/>
            <person name="Ogasawara N."/>
        </authorList>
    </citation>
    <scope>NUCLEOTIDE SEQUENCE [GENOMIC DNA]</scope>
    <source>
        <strain>168</strain>
    </source>
</reference>
<reference key="2">
    <citation type="journal article" date="1997" name="Nature">
        <title>The complete genome sequence of the Gram-positive bacterium Bacillus subtilis.</title>
        <authorList>
            <person name="Kunst F."/>
            <person name="Ogasawara N."/>
            <person name="Moszer I."/>
            <person name="Albertini A.M."/>
            <person name="Alloni G."/>
            <person name="Azevedo V."/>
            <person name="Bertero M.G."/>
            <person name="Bessieres P."/>
            <person name="Bolotin A."/>
            <person name="Borchert S."/>
            <person name="Borriss R."/>
            <person name="Boursier L."/>
            <person name="Brans A."/>
            <person name="Braun M."/>
            <person name="Brignell S.C."/>
            <person name="Bron S."/>
            <person name="Brouillet S."/>
            <person name="Bruschi C.V."/>
            <person name="Caldwell B."/>
            <person name="Capuano V."/>
            <person name="Carter N.M."/>
            <person name="Choi S.-K."/>
            <person name="Codani J.-J."/>
            <person name="Connerton I.F."/>
            <person name="Cummings N.J."/>
            <person name="Daniel R.A."/>
            <person name="Denizot F."/>
            <person name="Devine K.M."/>
            <person name="Duesterhoeft A."/>
            <person name="Ehrlich S.D."/>
            <person name="Emmerson P.T."/>
            <person name="Entian K.-D."/>
            <person name="Errington J."/>
            <person name="Fabret C."/>
            <person name="Ferrari E."/>
            <person name="Foulger D."/>
            <person name="Fritz C."/>
            <person name="Fujita M."/>
            <person name="Fujita Y."/>
            <person name="Fuma S."/>
            <person name="Galizzi A."/>
            <person name="Galleron N."/>
            <person name="Ghim S.-Y."/>
            <person name="Glaser P."/>
            <person name="Goffeau A."/>
            <person name="Golightly E.J."/>
            <person name="Grandi G."/>
            <person name="Guiseppi G."/>
            <person name="Guy B.J."/>
            <person name="Haga K."/>
            <person name="Haiech J."/>
            <person name="Harwood C.R."/>
            <person name="Henaut A."/>
            <person name="Hilbert H."/>
            <person name="Holsappel S."/>
            <person name="Hosono S."/>
            <person name="Hullo M.-F."/>
            <person name="Itaya M."/>
            <person name="Jones L.-M."/>
            <person name="Joris B."/>
            <person name="Karamata D."/>
            <person name="Kasahara Y."/>
            <person name="Klaerr-Blanchard M."/>
            <person name="Klein C."/>
            <person name="Kobayashi Y."/>
            <person name="Koetter P."/>
            <person name="Koningstein G."/>
            <person name="Krogh S."/>
            <person name="Kumano M."/>
            <person name="Kurita K."/>
            <person name="Lapidus A."/>
            <person name="Lardinois S."/>
            <person name="Lauber J."/>
            <person name="Lazarevic V."/>
            <person name="Lee S.-M."/>
            <person name="Levine A."/>
            <person name="Liu H."/>
            <person name="Masuda S."/>
            <person name="Mauel C."/>
            <person name="Medigue C."/>
            <person name="Medina N."/>
            <person name="Mellado R.P."/>
            <person name="Mizuno M."/>
            <person name="Moestl D."/>
            <person name="Nakai S."/>
            <person name="Noback M."/>
            <person name="Noone D."/>
            <person name="O'Reilly M."/>
            <person name="Ogawa K."/>
            <person name="Ogiwara A."/>
            <person name="Oudega B."/>
            <person name="Park S.-H."/>
            <person name="Parro V."/>
            <person name="Pohl T.M."/>
            <person name="Portetelle D."/>
            <person name="Porwollik S."/>
            <person name="Prescott A.M."/>
            <person name="Presecan E."/>
            <person name="Pujic P."/>
            <person name="Purnelle B."/>
            <person name="Rapoport G."/>
            <person name="Rey M."/>
            <person name="Reynolds S."/>
            <person name="Rieger M."/>
            <person name="Rivolta C."/>
            <person name="Rocha E."/>
            <person name="Roche B."/>
            <person name="Rose M."/>
            <person name="Sadaie Y."/>
            <person name="Sato T."/>
            <person name="Scanlan E."/>
            <person name="Schleich S."/>
            <person name="Schroeter R."/>
            <person name="Scoffone F."/>
            <person name="Sekiguchi J."/>
            <person name="Sekowska A."/>
            <person name="Seror S.J."/>
            <person name="Serror P."/>
            <person name="Shin B.-S."/>
            <person name="Soldo B."/>
            <person name="Sorokin A."/>
            <person name="Tacconi E."/>
            <person name="Takagi T."/>
            <person name="Takahashi H."/>
            <person name="Takemaru K."/>
            <person name="Takeuchi M."/>
            <person name="Tamakoshi A."/>
            <person name="Tanaka T."/>
            <person name="Terpstra P."/>
            <person name="Tognoni A."/>
            <person name="Tosato V."/>
            <person name="Uchiyama S."/>
            <person name="Vandenbol M."/>
            <person name="Vannier F."/>
            <person name="Vassarotti A."/>
            <person name="Viari A."/>
            <person name="Wambutt R."/>
            <person name="Wedler E."/>
            <person name="Wedler H."/>
            <person name="Weitzenegger T."/>
            <person name="Winters P."/>
            <person name="Wipat A."/>
            <person name="Yamamoto H."/>
            <person name="Yamane K."/>
            <person name="Yasumoto K."/>
            <person name="Yata K."/>
            <person name="Yoshida K."/>
            <person name="Yoshikawa H.-F."/>
            <person name="Zumstein E."/>
            <person name="Yoshikawa H."/>
            <person name="Danchin A."/>
        </authorList>
    </citation>
    <scope>NUCLEOTIDE SEQUENCE [LARGE SCALE GENOMIC DNA]</scope>
    <source>
        <strain>168</strain>
    </source>
</reference>
<sequence length="126" mass="14679">MKNLFIFLSLMMMFVLTACGGSKYDDAIDDVISQYKEHKGNDTEINIKRENAIVRVYEGGKYIQFAFYMPDNSSRELTTFKYYEKFGDKYEKMTDMPGNGENDRLGLSKKTPDYEEVKGEETELEE</sequence>
<protein>
    <recommendedName>
        <fullName>Uncharacterized protein YddJ</fullName>
    </recommendedName>
</protein>
<dbReference type="EMBL" id="AB001488">
    <property type="protein sequence ID" value="BAA19336.1"/>
    <property type="molecule type" value="Genomic_DNA"/>
</dbReference>
<dbReference type="EMBL" id="AL009126">
    <property type="protein sequence ID" value="CAB12306.1"/>
    <property type="molecule type" value="Genomic_DNA"/>
</dbReference>
<dbReference type="PIR" id="C69776">
    <property type="entry name" value="C69776"/>
</dbReference>
<dbReference type="RefSeq" id="NP_388380.1">
    <property type="nucleotide sequence ID" value="NC_000964.3"/>
</dbReference>
<dbReference type="RefSeq" id="WP_009969670.1">
    <property type="nucleotide sequence ID" value="NZ_OZ025638.1"/>
</dbReference>
<dbReference type="SMR" id="P96647"/>
<dbReference type="FunCoup" id="P96647">
    <property type="interactions" value="16"/>
</dbReference>
<dbReference type="STRING" id="224308.BSU04990"/>
<dbReference type="PaxDb" id="224308-BSU04990"/>
<dbReference type="EnsemblBacteria" id="CAB12306">
    <property type="protein sequence ID" value="CAB12306"/>
    <property type="gene ID" value="BSU_04990"/>
</dbReference>
<dbReference type="GeneID" id="939925"/>
<dbReference type="KEGG" id="bsu:BSU04990"/>
<dbReference type="PATRIC" id="fig|224308.43.peg.520"/>
<dbReference type="eggNOG" id="ENOG5033KB4">
    <property type="taxonomic scope" value="Bacteria"/>
</dbReference>
<dbReference type="InParanoid" id="P96647"/>
<dbReference type="OrthoDB" id="2938702at2"/>
<dbReference type="BioCyc" id="BSUB:BSU04990-MONOMER"/>
<dbReference type="Proteomes" id="UP000001570">
    <property type="component" value="Chromosome"/>
</dbReference>
<dbReference type="InterPro" id="IPR028075">
    <property type="entry name" value="DUF4467"/>
</dbReference>
<dbReference type="Pfam" id="PF14729">
    <property type="entry name" value="DUF4467"/>
    <property type="match status" value="1"/>
</dbReference>
<proteinExistence type="inferred from homology"/>
<name>YDDJ_BACSU</name>
<keyword id="KW-1185">Reference proteome</keyword>
<keyword id="KW-0732">Signal</keyword>
<organism>
    <name type="scientific">Bacillus subtilis (strain 168)</name>
    <dbReference type="NCBI Taxonomy" id="224308"/>
    <lineage>
        <taxon>Bacteria</taxon>
        <taxon>Bacillati</taxon>
        <taxon>Bacillota</taxon>
        <taxon>Bacilli</taxon>
        <taxon>Bacillales</taxon>
        <taxon>Bacillaceae</taxon>
        <taxon>Bacillus</taxon>
    </lineage>
</organism>